<sequence length="946" mass="108430">MRLFIGRRSRSIVISSNNYCLSFQRLRSIPGASSQQRQLSKTPSVTIKSYPDTDLSSDSNYLEVKSCIFNGLLGLVCLNGDIYVAVISGVQNVGFPRWKLIDHQVRPSESIYKVLDVDFYSLENDVFDYLLCERSEQNYDKLIHEHPCGPLKKLFSDGTFYYSRDFDISNIVKNHGLSHNLEYTVDNQDLSFIWNANLASEVINWRSKISNEEKQLFANAGFLTFVIRGYCKTALIEDGPNTASITIISRISTESKQDTLELEGISEDGRVSLFVETEIVVTTEKFIFSYTQVNGSIPLFWESVESQLLYGKKIKVTKDSIEAQGAFDRHFDNLTSKYGVVSIVNIIKPKSESQEKLALTYKDCAESKGIKITNIEYSSSVLTKSPHKLLYLLKQDIYEFGAFAYDISRGIYFAKQTGVLRISAFDSIEKPNTVERLVSKEVLELTTNEIDVFELTSPFLDAHDKLWSENYYWLDRTYTKHTKNSGKYTKVYSKLFGSRVRLYDPLHIYISQYLKQLRSKYTFEKDISIFAGTFNISGKIPKDDIKDWIFPKSMSKEDEMADLYVIGLEEVVELTPGHMLATDPYVRQFWEKKILTLLNGPGRKKKYIRLWSTQLGGILLLLFMNETEYSKVKHIEGDVKKTGFGGMASNKGAVAVSFKYSATRFCVLVSHLAAGLENVEQRHNDYKTIAKSIRFSKGLRIKDHDAIIWMGDFNYRILMSNEDVRRKIVSKEYASLFEKDQLNQQMIAGESFPYFHEMAIDFPPTYKFDPGTKNYDTSEKMRIPAWTDRILSRGEVLEQLEYKCCEDILFSDHRPVYAIFRARVTVVDEQKKTTLGTQIYEKIMERLEGLDDDEKIAVLSDDAFVIESFEGSDSIAGPTHSPTPIPEPKRGRKLPPPSSDLKKWWIGSGKQVKVVLDVDPAVYMINPKRDPNPFVENEDEPLFIER</sequence>
<accession>P40559</accession>
<accession>D6VVS9</accession>
<organism>
    <name type="scientific">Saccharomyces cerevisiae (strain ATCC 204508 / S288c)</name>
    <name type="common">Baker's yeast</name>
    <dbReference type="NCBI Taxonomy" id="559292"/>
    <lineage>
        <taxon>Eukaryota</taxon>
        <taxon>Fungi</taxon>
        <taxon>Dikarya</taxon>
        <taxon>Ascomycota</taxon>
        <taxon>Saccharomycotina</taxon>
        <taxon>Saccharomycetes</taxon>
        <taxon>Saccharomycetales</taxon>
        <taxon>Saccharomycetaceae</taxon>
        <taxon>Saccharomyces</taxon>
    </lineage>
</organism>
<evidence type="ECO:0000255" key="1">
    <source>
        <dbReference type="PROSITE-ProRule" id="PRU00183"/>
    </source>
</evidence>
<evidence type="ECO:0000256" key="2">
    <source>
        <dbReference type="SAM" id="MobiDB-lite"/>
    </source>
</evidence>
<evidence type="ECO:0000269" key="3">
    <source>
    </source>
</evidence>
<evidence type="ECO:0000269" key="4">
    <source>
    </source>
</evidence>
<evidence type="ECO:0000269" key="5">
    <source>
    </source>
</evidence>
<evidence type="ECO:0000269" key="6">
    <source>
    </source>
</evidence>
<evidence type="ECO:0000269" key="7">
    <source>
    </source>
</evidence>
<evidence type="ECO:0000269" key="8">
    <source>
    </source>
</evidence>
<evidence type="ECO:0000269" key="9">
    <source>
    </source>
</evidence>
<evidence type="ECO:0000269" key="10">
    <source>
    </source>
</evidence>
<evidence type="ECO:0000269" key="11">
    <source>
    </source>
</evidence>
<evidence type="ECO:0000269" key="12">
    <source>
    </source>
</evidence>
<evidence type="ECO:0000305" key="13"/>
<protein>
    <recommendedName>
        <fullName>Phosphatidylinositol 4,5-bisphosphate 5-phosphatase INP51</fullName>
        <ecNumber>3.1.3.36</ecNumber>
    </recommendedName>
    <alternativeName>
        <fullName>Synaptojanin-like protein 1</fullName>
    </alternativeName>
</protein>
<name>INP51_YEAST</name>
<comment type="function">
    <text evidence="3 6 7 8 9 10 11 12">Controls the cellular levels and subcellular distribution of phosphatidylinositol 4,5-bisphosphate (PtdIns(4,5)P2). Does not utilize phosphatidylinositol 3,5-bisphosphate (PtdIns(3,5)P2), nor phosphatidylinositol 3-phosphate (PtdIns(3)P) and phosphatidylinositol 4-phosphate (PtdIns(4)P). Plays an essential role in a TGN (trans Golgi network)-to-early endosome pathway. Involved in endocytosis and acts as a negative regulator of the Slm pathway which modulates polarized actin assembly and growth.</text>
</comment>
<comment type="catalytic activity">
    <reaction>
        <text>a 1,2-diacyl-sn-glycero-3-phospho-(1D-myo-inositol-4,5-bisphosphate) + H2O = a 1,2-diacyl-sn-glycero-3-phospho-(1D-myo-inositol 4-phosphate) + phosphate</text>
        <dbReference type="Rhea" id="RHEA:22764"/>
        <dbReference type="ChEBI" id="CHEBI:15377"/>
        <dbReference type="ChEBI" id="CHEBI:43474"/>
        <dbReference type="ChEBI" id="CHEBI:58178"/>
        <dbReference type="ChEBI" id="CHEBI:58456"/>
        <dbReference type="EC" id="3.1.3.36"/>
    </reaction>
</comment>
<comment type="activity regulation">
    <text evidence="6">IRS4 and TAX4 are both positive regulator of INP51 activity and phosphatidylinositol 4,5-bisphosphate turnover.</text>
</comment>
<comment type="subunit">
    <text evidence="6">Interacts with IRS4 and TAX4.</text>
</comment>
<comment type="interaction">
    <interactant intactId="EBI-24915">
        <id>P40559</id>
    </interactant>
    <interactant intactId="EBI-27090">
        <id>P36115</id>
        <label>IRS4</label>
    </interactant>
    <organismsDiffer>false</organismsDiffer>
    <experiments>4</experiments>
</comment>
<comment type="interaction">
    <interactant intactId="EBI-24915">
        <id>P40559</id>
    </interactant>
    <interactant intactId="EBI-25970">
        <id>P47030</id>
        <label>TAX4</label>
    </interactant>
    <organismsDiffer>false</organismsDiffer>
    <experiments>3</experiments>
</comment>
<comment type="subcellular location">
    <subcellularLocation>
        <location evidence="4">Cytoplasm</location>
        <location evidence="4">Cytoskeleton</location>
        <location evidence="4">Actin patch</location>
    </subcellularLocation>
</comment>
<comment type="miscellaneous">
    <text evidence="5">Present with 98 molecules/cell in log phase SD medium.</text>
</comment>
<comment type="similarity">
    <text evidence="13">Belongs to the synaptojanin family.</text>
</comment>
<comment type="similarity">
    <text evidence="13">In the central section; belongs to the inositol 1,4,5-trisphosphate 5-phosphatase family.</text>
</comment>
<feature type="chain" id="PRO_0000209741" description="Phosphatidylinositol 4,5-bisphosphate 5-phosphatase INP51">
    <location>
        <begin position="1"/>
        <end position="946"/>
    </location>
</feature>
<feature type="domain" description="SAC" evidence="1">
    <location>
        <begin position="151"/>
        <end position="480"/>
    </location>
</feature>
<feature type="region of interest" description="Disordered" evidence="2">
    <location>
        <begin position="872"/>
        <end position="902"/>
    </location>
</feature>
<feature type="region of interest" description="Disordered" evidence="2">
    <location>
        <begin position="927"/>
        <end position="946"/>
    </location>
</feature>
<feature type="compositionally biased region" description="Acidic residues" evidence="2">
    <location>
        <begin position="936"/>
        <end position="946"/>
    </location>
</feature>
<proteinExistence type="evidence at protein level"/>
<gene>
    <name type="primary">INP51</name>
    <name type="synonym">SJL1</name>
    <name type="ordered locus">YIL002C</name>
    <name type="ORF">YIA2C</name>
</gene>
<keyword id="KW-0963">Cytoplasm</keyword>
<keyword id="KW-0206">Cytoskeleton</keyword>
<keyword id="KW-0254">Endocytosis</keyword>
<keyword id="KW-0378">Hydrolase</keyword>
<keyword id="KW-0443">Lipid metabolism</keyword>
<keyword id="KW-0653">Protein transport</keyword>
<keyword id="KW-1185">Reference proteome</keyword>
<keyword id="KW-0813">Transport</keyword>
<dbReference type="EC" id="3.1.3.36"/>
<dbReference type="EMBL" id="X79743">
    <property type="status" value="NOT_ANNOTATED_CDS"/>
    <property type="molecule type" value="Genomic_DNA"/>
</dbReference>
<dbReference type="EMBL" id="Z38062">
    <property type="protein sequence ID" value="CAA86201.1"/>
    <property type="molecule type" value="Genomic_DNA"/>
</dbReference>
<dbReference type="EMBL" id="BK006942">
    <property type="protein sequence ID" value="DAA08545.1"/>
    <property type="molecule type" value="Genomic_DNA"/>
</dbReference>
<dbReference type="PIR" id="S48433">
    <property type="entry name" value="S48433"/>
</dbReference>
<dbReference type="RefSeq" id="NP_012264.3">
    <property type="nucleotide sequence ID" value="NM_001179352.3"/>
</dbReference>
<dbReference type="SMR" id="P40559"/>
<dbReference type="BioGRID" id="34990">
    <property type="interactions" value="141"/>
</dbReference>
<dbReference type="DIP" id="DIP-2677N"/>
<dbReference type="ELM" id="P40559"/>
<dbReference type="FunCoup" id="P40559">
    <property type="interactions" value="55"/>
</dbReference>
<dbReference type="IntAct" id="P40559">
    <property type="interactions" value="19"/>
</dbReference>
<dbReference type="MINT" id="P40559"/>
<dbReference type="STRING" id="4932.YIL002C"/>
<dbReference type="iPTMnet" id="P40559"/>
<dbReference type="PaxDb" id="4932-YIL002C"/>
<dbReference type="PeptideAtlas" id="P40559"/>
<dbReference type="EnsemblFungi" id="YIL002C_mRNA">
    <property type="protein sequence ID" value="YIL002C"/>
    <property type="gene ID" value="YIL002C"/>
</dbReference>
<dbReference type="GeneID" id="854815"/>
<dbReference type="KEGG" id="sce:YIL002C"/>
<dbReference type="AGR" id="SGD:S000001264"/>
<dbReference type="SGD" id="S000001264">
    <property type="gene designation" value="INP51"/>
</dbReference>
<dbReference type="VEuPathDB" id="FungiDB:YIL002C"/>
<dbReference type="eggNOG" id="KOG0566">
    <property type="taxonomic scope" value="Eukaryota"/>
</dbReference>
<dbReference type="HOGENOM" id="CLU_003016_2_1_1"/>
<dbReference type="InParanoid" id="P40559"/>
<dbReference type="OMA" id="FPYFHEM"/>
<dbReference type="OrthoDB" id="405996at2759"/>
<dbReference type="BioCyc" id="YEAST:YIL002C-MONOMER"/>
<dbReference type="Reactome" id="R-SCE-1660499">
    <property type="pathway name" value="Synthesis of PIPs at the plasma membrane"/>
</dbReference>
<dbReference type="BioGRID-ORCS" id="854815">
    <property type="hits" value="0 hits in 10 CRISPR screens"/>
</dbReference>
<dbReference type="PRO" id="PR:P40559"/>
<dbReference type="Proteomes" id="UP000002311">
    <property type="component" value="Chromosome IX"/>
</dbReference>
<dbReference type="RNAct" id="P40559">
    <property type="molecule type" value="protein"/>
</dbReference>
<dbReference type="GO" id="GO:0030479">
    <property type="term" value="C:actin cortical patch"/>
    <property type="evidence" value="ECO:0007669"/>
    <property type="project" value="UniProtKB-SubCell"/>
</dbReference>
<dbReference type="GO" id="GO:0005737">
    <property type="term" value="C:cytoplasm"/>
    <property type="evidence" value="ECO:0000314"/>
    <property type="project" value="SGD"/>
</dbReference>
<dbReference type="GO" id="GO:0016020">
    <property type="term" value="C:membrane"/>
    <property type="evidence" value="ECO:0000314"/>
    <property type="project" value="SGD"/>
</dbReference>
<dbReference type="GO" id="GO:0052658">
    <property type="term" value="F:inositol-1,4,5-trisphosphate 5-phosphatase activity"/>
    <property type="evidence" value="ECO:0000318"/>
    <property type="project" value="GO_Central"/>
</dbReference>
<dbReference type="GO" id="GO:0043813">
    <property type="term" value="F:phosphatidylinositol-3,5-bisphosphate 5-phosphatase activity"/>
    <property type="evidence" value="ECO:0000318"/>
    <property type="project" value="GO_Central"/>
</dbReference>
<dbReference type="GO" id="GO:0004439">
    <property type="term" value="F:phosphatidylinositol-4,5-bisphosphate 5-phosphatase activity"/>
    <property type="evidence" value="ECO:0000314"/>
    <property type="project" value="SGD"/>
</dbReference>
<dbReference type="GO" id="GO:0006897">
    <property type="term" value="P:endocytosis"/>
    <property type="evidence" value="ECO:0007669"/>
    <property type="project" value="UniProtKB-KW"/>
</dbReference>
<dbReference type="GO" id="GO:0046856">
    <property type="term" value="P:phosphatidylinositol dephosphorylation"/>
    <property type="evidence" value="ECO:0000314"/>
    <property type="project" value="SGD"/>
</dbReference>
<dbReference type="GO" id="GO:0015031">
    <property type="term" value="P:protein transport"/>
    <property type="evidence" value="ECO:0007669"/>
    <property type="project" value="UniProtKB-KW"/>
</dbReference>
<dbReference type="CDD" id="cd09090">
    <property type="entry name" value="INPP5c_ScInp51p-like"/>
    <property type="match status" value="1"/>
</dbReference>
<dbReference type="FunFam" id="3.60.10.10:FF:000029">
    <property type="entry name" value="Inositol polyphosphate 5-phosphatase"/>
    <property type="match status" value="1"/>
</dbReference>
<dbReference type="Gene3D" id="3.60.10.10">
    <property type="entry name" value="Endonuclease/exonuclease/phosphatase"/>
    <property type="match status" value="1"/>
</dbReference>
<dbReference type="InterPro" id="IPR036691">
    <property type="entry name" value="Endo/exonu/phosph_ase_sf"/>
</dbReference>
<dbReference type="InterPro" id="IPR046985">
    <property type="entry name" value="IP5"/>
</dbReference>
<dbReference type="InterPro" id="IPR000300">
    <property type="entry name" value="IPPc"/>
</dbReference>
<dbReference type="InterPro" id="IPR002013">
    <property type="entry name" value="SAC_dom"/>
</dbReference>
<dbReference type="PANTHER" id="PTHR11200">
    <property type="entry name" value="INOSITOL 5-PHOSPHATASE"/>
    <property type="match status" value="1"/>
</dbReference>
<dbReference type="PANTHER" id="PTHR11200:SF269">
    <property type="entry name" value="PHOSPHATIDYLINOSITOL 4,5-BISPHOSPHATE 5-PHOSPHATASE INP51"/>
    <property type="match status" value="1"/>
</dbReference>
<dbReference type="Pfam" id="PF22669">
    <property type="entry name" value="Exo_endo_phos2"/>
    <property type="match status" value="1"/>
</dbReference>
<dbReference type="Pfam" id="PF02383">
    <property type="entry name" value="Syja_N"/>
    <property type="match status" value="1"/>
</dbReference>
<dbReference type="SMART" id="SM00128">
    <property type="entry name" value="IPPc"/>
    <property type="match status" value="1"/>
</dbReference>
<dbReference type="SUPFAM" id="SSF56219">
    <property type="entry name" value="DNase I-like"/>
    <property type="match status" value="1"/>
</dbReference>
<dbReference type="PROSITE" id="PS50275">
    <property type="entry name" value="SAC"/>
    <property type="match status" value="1"/>
</dbReference>
<reference key="1">
    <citation type="journal article" date="1995" name="Yeast">
        <title>Nucleotide sequence and analysis of the centromeric region of yeast chromosome IX.</title>
        <authorList>
            <person name="Voss H."/>
            <person name="Tamames J."/>
            <person name="Teodoru C."/>
            <person name="Valencia A."/>
            <person name="Sensen C."/>
            <person name="Wiemann S."/>
            <person name="Schwager C."/>
            <person name="Zimmermann J."/>
            <person name="Sander C."/>
            <person name="Ansorge W."/>
        </authorList>
    </citation>
    <scope>NUCLEOTIDE SEQUENCE [GENOMIC DNA]</scope>
    <source>
        <strain>ATCC 204508 / S288c</strain>
    </source>
</reference>
<reference key="2">
    <citation type="journal article" date="1997" name="Nature">
        <title>The nucleotide sequence of Saccharomyces cerevisiae chromosome IX.</title>
        <authorList>
            <person name="Churcher C.M."/>
            <person name="Bowman S."/>
            <person name="Badcock K."/>
            <person name="Bankier A.T."/>
            <person name="Brown D."/>
            <person name="Chillingworth T."/>
            <person name="Connor R."/>
            <person name="Devlin K."/>
            <person name="Gentles S."/>
            <person name="Hamlin N."/>
            <person name="Harris D.E."/>
            <person name="Horsnell T."/>
            <person name="Hunt S."/>
            <person name="Jagels K."/>
            <person name="Jones M."/>
            <person name="Lye G."/>
            <person name="Moule S."/>
            <person name="Odell C."/>
            <person name="Pearson D."/>
            <person name="Rajandream M.A."/>
            <person name="Rice P."/>
            <person name="Rowley N."/>
            <person name="Skelton J."/>
            <person name="Smith V."/>
            <person name="Walsh S.V."/>
            <person name="Whitehead S."/>
            <person name="Barrell B.G."/>
        </authorList>
    </citation>
    <scope>NUCLEOTIDE SEQUENCE [LARGE SCALE GENOMIC DNA]</scope>
    <source>
        <strain>ATCC 204508 / S288c</strain>
    </source>
</reference>
<reference key="3">
    <citation type="journal article" date="2014" name="G3 (Bethesda)">
        <title>The reference genome sequence of Saccharomyces cerevisiae: Then and now.</title>
        <authorList>
            <person name="Engel S.R."/>
            <person name="Dietrich F.S."/>
            <person name="Fisk D.G."/>
            <person name="Binkley G."/>
            <person name="Balakrishnan R."/>
            <person name="Costanzo M.C."/>
            <person name="Dwight S.S."/>
            <person name="Hitz B.C."/>
            <person name="Karra K."/>
            <person name="Nash R.S."/>
            <person name="Weng S."/>
            <person name="Wong E.D."/>
            <person name="Lloyd P."/>
            <person name="Skrzypek M.S."/>
            <person name="Miyasato S.R."/>
            <person name="Simison M."/>
            <person name="Cherry J.M."/>
        </authorList>
    </citation>
    <scope>GENOME REANNOTATION</scope>
    <source>
        <strain>ATCC 204508 / S288c</strain>
    </source>
</reference>
<reference key="4">
    <citation type="journal article" date="1997" name="J. Cell Biol.">
        <title>Novel genes involved in endosomal traffic in yeast revealed by suppression of a targeting-defective plasma membrane ATPase mutant.</title>
        <authorList>
            <person name="Luo W.-J."/>
            <person name="Chang A."/>
        </authorList>
    </citation>
    <scope>FUNCTION</scope>
</reference>
<reference key="5">
    <citation type="journal article" date="1998" name="Genetics">
        <title>Identification and characterization of an essential family of inositol polyphosphate 5-phosphatases (INP51, INP52 and INP53 gene products) in the yeast Saccharomyces cerevisiae.</title>
        <authorList>
            <person name="Stolz L.E."/>
            <person name="Huynh C.V."/>
            <person name="Thorner J."/>
            <person name="York J.D."/>
        </authorList>
    </citation>
    <scope>FUNCTION</scope>
</reference>
<reference key="6">
    <citation type="journal article" date="1998" name="J. Cell Sci.">
        <title>Synaptojanin family members are implicated in endocytic membrane traffic in yeast.</title>
        <authorList>
            <person name="Singer-Krueger B."/>
            <person name="Nemoto Y."/>
            <person name="Daniell L."/>
            <person name="Ferro-Novick S."/>
            <person name="De Camilli P."/>
        </authorList>
    </citation>
    <scope>FUNCTION</scope>
</reference>
<reference key="7">
    <citation type="journal article" date="2001" name="Biochem. J.">
        <title>Mammalian inositol polyphosphate 5-phosphatase II can compensate for the absence of all three yeast Sac1-like-domain-containing 5-phosphatases.</title>
        <authorList>
            <person name="O'Malley C.J."/>
            <person name="McColl B.K."/>
            <person name="Kong A.M."/>
            <person name="Ellis S.L."/>
            <person name="Wijayaratnam A.P.W."/>
            <person name="Sambrook J."/>
            <person name="Mitchell C.A."/>
        </authorList>
    </citation>
    <scope>FUNCTION</scope>
</reference>
<reference key="8">
    <citation type="journal article" date="2003" name="Nature">
        <title>Global analysis of protein localization in budding yeast.</title>
        <authorList>
            <person name="Huh W.-K."/>
            <person name="Falvo J.V."/>
            <person name="Gerke L.C."/>
            <person name="Carroll A.S."/>
            <person name="Howson R.W."/>
            <person name="Weissman J.S."/>
            <person name="O'Shea E.K."/>
        </authorList>
    </citation>
    <scope>SUBCELLULAR LOCATION [LARGE SCALE ANALYSIS]</scope>
</reference>
<reference key="9">
    <citation type="journal article" date="2003" name="Nature">
        <title>Global analysis of protein expression in yeast.</title>
        <authorList>
            <person name="Ghaemmaghami S."/>
            <person name="Huh W.-K."/>
            <person name="Bower K."/>
            <person name="Howson R.W."/>
            <person name="Belle A."/>
            <person name="Dephoure N."/>
            <person name="O'Shea E.K."/>
            <person name="Weissman J.S."/>
        </authorList>
    </citation>
    <scope>LEVEL OF PROTEIN EXPRESSION [LARGE SCALE ANALYSIS]</scope>
</reference>
<reference key="10">
    <citation type="journal article" date="2004" name="J. Biol. Chem.">
        <title>Negative regulation of phosphatidylinositol 4,5-bisphosphate levels by the INP51-associated proteins TAX4 and IRS4.</title>
        <authorList>
            <person name="Morales-Johansson H."/>
            <person name="Jenoe P."/>
            <person name="Cooke F.T."/>
            <person name="Hall M.N."/>
        </authorList>
    </citation>
    <scope>FUNCTION</scope>
    <scope>ACTIVITY REGULATION</scope>
    <scope>INTERACTION WITH IRS4 AND TAX4</scope>
</reference>
<reference key="11">
    <citation type="journal article" date="2005" name="FEMS Yeast Res.">
        <title>Interaction of Pik1p and Sjl proteins in membrane trafficking.</title>
        <authorList>
            <person name="Nguyen P.H."/>
            <person name="Hasek J."/>
            <person name="Kohlwein S.D."/>
            <person name="Romero C."/>
            <person name="Choi J.H."/>
            <person name="Vancura A."/>
        </authorList>
    </citation>
    <scope>FUNCTION</scope>
</reference>
<reference key="12">
    <citation type="journal article" date="2005" name="Mol. Biol. Cell">
        <title>The pleckstrin homology domain proteins Slm1 and Slm2 are required for actin cytoskeleton organization in yeast and bind phosphatidylinositol-4,5-bisphosphate and TORC2.</title>
        <authorList>
            <person name="Fadri M."/>
            <person name="Daquinag A."/>
            <person name="Wang S."/>
            <person name="Xue T."/>
            <person name="Kunz J."/>
        </authorList>
    </citation>
    <scope>FUNCTION</scope>
</reference>
<reference key="13">
    <citation type="journal article" date="2007" name="J. Cell Biol.">
        <title>PtdIns(4,5)P2 turnover is required for multiple stages during clathrin- and actin-dependent endocytic internalization.</title>
        <authorList>
            <person name="Sun Y."/>
            <person name="Carroll S."/>
            <person name="Kaksonen M."/>
            <person name="Toshima J.Y."/>
            <person name="Drubin D.G."/>
        </authorList>
    </citation>
    <scope>FUNCTION</scope>
</reference>